<organism>
    <name type="scientific">Listeria monocytogenes serovar 1/2a (strain ATCC BAA-679 / EGD-e)</name>
    <dbReference type="NCBI Taxonomy" id="169963"/>
    <lineage>
        <taxon>Bacteria</taxon>
        <taxon>Bacillati</taxon>
        <taxon>Bacillota</taxon>
        <taxon>Bacilli</taxon>
        <taxon>Bacillales</taxon>
        <taxon>Listeriaceae</taxon>
        <taxon>Listeria</taxon>
    </lineage>
</organism>
<feature type="chain" id="PRO_0000136188" description="Histidine--tRNA ligase">
    <location>
        <begin position="1"/>
        <end position="425"/>
    </location>
</feature>
<accession>Q8Y708</accession>
<keyword id="KW-0030">Aminoacyl-tRNA synthetase</keyword>
<keyword id="KW-0067">ATP-binding</keyword>
<keyword id="KW-0963">Cytoplasm</keyword>
<keyword id="KW-0436">Ligase</keyword>
<keyword id="KW-0547">Nucleotide-binding</keyword>
<keyword id="KW-0648">Protein biosynthesis</keyword>
<keyword id="KW-1185">Reference proteome</keyword>
<name>SYH_LISMO</name>
<sequence>MDLQLPRGTRDILPEEVSKWHFLETEFKNVCENYQYEEIRTPVFEHTELFERGVGDSTDIVSKEMYTFQDKGGRSLTLRPEGTASVVRAFVEHKLYGEVSQPIKMYYNEPMFRYERPQGGRQRQFTQMGIEALGSDDPSIDVEVISLAMEFFRKIGLTNIKLVINSLGDKESRLKHREALVAHFEPHIDEFCAECQVRLHKNPLRILDCKKDHDNPLIQSAPSILDFLNEESVAYFENVKNYLNALEIPFEIDPTMVRGLDYYNHTTFEIMSVEEGFGAKTTLCGGGRYHGLVREFGGPDTPGMGFGIGVERILLALEKADIEIPAKKPLEVYVITAQPEAELKGVTLVNKLRQNGISAEKDYLKRKFKAQLKDANRKNAVYTIILGEEELQTGNYQLKNMETGEQEAVSETTILEKLSNTKGEK</sequence>
<gene>
    <name evidence="1" type="primary">hisS</name>
    <name type="ordered locus">lmo1520</name>
</gene>
<dbReference type="EC" id="6.1.1.21" evidence="1"/>
<dbReference type="EMBL" id="AL591979">
    <property type="protein sequence ID" value="CAC99598.1"/>
    <property type="molecule type" value="Genomic_DNA"/>
</dbReference>
<dbReference type="PIR" id="AH1264">
    <property type="entry name" value="AH1264"/>
</dbReference>
<dbReference type="RefSeq" id="NP_465045.1">
    <property type="nucleotide sequence ID" value="NC_003210.1"/>
</dbReference>
<dbReference type="RefSeq" id="WP_010989736.1">
    <property type="nucleotide sequence ID" value="NZ_CP149495.1"/>
</dbReference>
<dbReference type="SMR" id="Q8Y708"/>
<dbReference type="STRING" id="169963.gene:17594177"/>
<dbReference type="PaxDb" id="169963-lmo1520"/>
<dbReference type="EnsemblBacteria" id="CAC99598">
    <property type="protein sequence ID" value="CAC99598"/>
    <property type="gene ID" value="CAC99598"/>
</dbReference>
<dbReference type="GeneID" id="987781"/>
<dbReference type="KEGG" id="lmo:lmo1520"/>
<dbReference type="PATRIC" id="fig|169963.11.peg.1561"/>
<dbReference type="eggNOG" id="COG0124">
    <property type="taxonomic scope" value="Bacteria"/>
</dbReference>
<dbReference type="HOGENOM" id="CLU_025113_1_1_9"/>
<dbReference type="OrthoDB" id="9800814at2"/>
<dbReference type="PhylomeDB" id="Q8Y708"/>
<dbReference type="BioCyc" id="LMON169963:LMO1520-MONOMER"/>
<dbReference type="Proteomes" id="UP000000817">
    <property type="component" value="Chromosome"/>
</dbReference>
<dbReference type="GO" id="GO:0005737">
    <property type="term" value="C:cytoplasm"/>
    <property type="evidence" value="ECO:0007669"/>
    <property type="project" value="UniProtKB-SubCell"/>
</dbReference>
<dbReference type="GO" id="GO:0005524">
    <property type="term" value="F:ATP binding"/>
    <property type="evidence" value="ECO:0007669"/>
    <property type="project" value="UniProtKB-UniRule"/>
</dbReference>
<dbReference type="GO" id="GO:0140096">
    <property type="term" value="F:catalytic activity, acting on a protein"/>
    <property type="evidence" value="ECO:0007669"/>
    <property type="project" value="UniProtKB-ARBA"/>
</dbReference>
<dbReference type="GO" id="GO:0004821">
    <property type="term" value="F:histidine-tRNA ligase activity"/>
    <property type="evidence" value="ECO:0000318"/>
    <property type="project" value="GO_Central"/>
</dbReference>
<dbReference type="GO" id="GO:0016740">
    <property type="term" value="F:transferase activity"/>
    <property type="evidence" value="ECO:0007669"/>
    <property type="project" value="UniProtKB-ARBA"/>
</dbReference>
<dbReference type="GO" id="GO:0006427">
    <property type="term" value="P:histidyl-tRNA aminoacylation"/>
    <property type="evidence" value="ECO:0000318"/>
    <property type="project" value="GO_Central"/>
</dbReference>
<dbReference type="CDD" id="cd00773">
    <property type="entry name" value="HisRS-like_core"/>
    <property type="match status" value="1"/>
</dbReference>
<dbReference type="CDD" id="cd00859">
    <property type="entry name" value="HisRS_anticodon"/>
    <property type="match status" value="1"/>
</dbReference>
<dbReference type="FunFam" id="3.30.930.10:FF:000005">
    <property type="entry name" value="Histidine--tRNA ligase"/>
    <property type="match status" value="1"/>
</dbReference>
<dbReference type="Gene3D" id="3.40.50.800">
    <property type="entry name" value="Anticodon-binding domain"/>
    <property type="match status" value="1"/>
</dbReference>
<dbReference type="Gene3D" id="3.30.930.10">
    <property type="entry name" value="Bira Bifunctional Protein, Domain 2"/>
    <property type="match status" value="1"/>
</dbReference>
<dbReference type="HAMAP" id="MF_00127">
    <property type="entry name" value="His_tRNA_synth"/>
    <property type="match status" value="1"/>
</dbReference>
<dbReference type="InterPro" id="IPR006195">
    <property type="entry name" value="aa-tRNA-synth_II"/>
</dbReference>
<dbReference type="InterPro" id="IPR045864">
    <property type="entry name" value="aa-tRNA-synth_II/BPL/LPL"/>
</dbReference>
<dbReference type="InterPro" id="IPR004154">
    <property type="entry name" value="Anticodon-bd"/>
</dbReference>
<dbReference type="InterPro" id="IPR036621">
    <property type="entry name" value="Anticodon-bd_dom_sf"/>
</dbReference>
<dbReference type="InterPro" id="IPR015807">
    <property type="entry name" value="His-tRNA-ligase"/>
</dbReference>
<dbReference type="InterPro" id="IPR041715">
    <property type="entry name" value="HisRS-like_core"/>
</dbReference>
<dbReference type="InterPro" id="IPR004516">
    <property type="entry name" value="HisRS/HisZ"/>
</dbReference>
<dbReference type="InterPro" id="IPR033656">
    <property type="entry name" value="HisRS_anticodon"/>
</dbReference>
<dbReference type="NCBIfam" id="TIGR00442">
    <property type="entry name" value="hisS"/>
    <property type="match status" value="1"/>
</dbReference>
<dbReference type="PANTHER" id="PTHR43707:SF1">
    <property type="entry name" value="HISTIDINE--TRNA LIGASE, MITOCHONDRIAL-RELATED"/>
    <property type="match status" value="1"/>
</dbReference>
<dbReference type="PANTHER" id="PTHR43707">
    <property type="entry name" value="HISTIDYL-TRNA SYNTHETASE"/>
    <property type="match status" value="1"/>
</dbReference>
<dbReference type="Pfam" id="PF03129">
    <property type="entry name" value="HGTP_anticodon"/>
    <property type="match status" value="1"/>
</dbReference>
<dbReference type="Pfam" id="PF13393">
    <property type="entry name" value="tRNA-synt_His"/>
    <property type="match status" value="1"/>
</dbReference>
<dbReference type="PIRSF" id="PIRSF001549">
    <property type="entry name" value="His-tRNA_synth"/>
    <property type="match status" value="1"/>
</dbReference>
<dbReference type="SUPFAM" id="SSF52954">
    <property type="entry name" value="Class II aaRS ABD-related"/>
    <property type="match status" value="1"/>
</dbReference>
<dbReference type="SUPFAM" id="SSF55681">
    <property type="entry name" value="Class II aaRS and biotin synthetases"/>
    <property type="match status" value="1"/>
</dbReference>
<dbReference type="PROSITE" id="PS50862">
    <property type="entry name" value="AA_TRNA_LIGASE_II"/>
    <property type="match status" value="1"/>
</dbReference>
<evidence type="ECO:0000255" key="1">
    <source>
        <dbReference type="HAMAP-Rule" id="MF_00127"/>
    </source>
</evidence>
<protein>
    <recommendedName>
        <fullName evidence="1">Histidine--tRNA ligase</fullName>
        <ecNumber evidence="1">6.1.1.21</ecNumber>
    </recommendedName>
    <alternativeName>
        <fullName evidence="1">Histidyl-tRNA synthetase</fullName>
        <shortName evidence="1">HisRS</shortName>
    </alternativeName>
</protein>
<reference key="1">
    <citation type="journal article" date="2001" name="Science">
        <title>Comparative genomics of Listeria species.</title>
        <authorList>
            <person name="Glaser P."/>
            <person name="Frangeul L."/>
            <person name="Buchrieser C."/>
            <person name="Rusniok C."/>
            <person name="Amend A."/>
            <person name="Baquero F."/>
            <person name="Berche P."/>
            <person name="Bloecker H."/>
            <person name="Brandt P."/>
            <person name="Chakraborty T."/>
            <person name="Charbit A."/>
            <person name="Chetouani F."/>
            <person name="Couve E."/>
            <person name="de Daruvar A."/>
            <person name="Dehoux P."/>
            <person name="Domann E."/>
            <person name="Dominguez-Bernal G."/>
            <person name="Duchaud E."/>
            <person name="Durant L."/>
            <person name="Dussurget O."/>
            <person name="Entian K.-D."/>
            <person name="Fsihi H."/>
            <person name="Garcia-del Portillo F."/>
            <person name="Garrido P."/>
            <person name="Gautier L."/>
            <person name="Goebel W."/>
            <person name="Gomez-Lopez N."/>
            <person name="Hain T."/>
            <person name="Hauf J."/>
            <person name="Jackson D."/>
            <person name="Jones L.-M."/>
            <person name="Kaerst U."/>
            <person name="Kreft J."/>
            <person name="Kuhn M."/>
            <person name="Kunst F."/>
            <person name="Kurapkat G."/>
            <person name="Madueno E."/>
            <person name="Maitournam A."/>
            <person name="Mata Vicente J."/>
            <person name="Ng E."/>
            <person name="Nedjari H."/>
            <person name="Nordsiek G."/>
            <person name="Novella S."/>
            <person name="de Pablos B."/>
            <person name="Perez-Diaz J.-C."/>
            <person name="Purcell R."/>
            <person name="Remmel B."/>
            <person name="Rose M."/>
            <person name="Schlueter T."/>
            <person name="Simoes N."/>
            <person name="Tierrez A."/>
            <person name="Vazquez-Boland J.-A."/>
            <person name="Voss H."/>
            <person name="Wehland J."/>
            <person name="Cossart P."/>
        </authorList>
    </citation>
    <scope>NUCLEOTIDE SEQUENCE [LARGE SCALE GENOMIC DNA]</scope>
    <source>
        <strain>ATCC BAA-679 / EGD-e</strain>
    </source>
</reference>
<proteinExistence type="inferred from homology"/>
<comment type="catalytic activity">
    <reaction evidence="1">
        <text>tRNA(His) + L-histidine + ATP = L-histidyl-tRNA(His) + AMP + diphosphate + H(+)</text>
        <dbReference type="Rhea" id="RHEA:17313"/>
        <dbReference type="Rhea" id="RHEA-COMP:9665"/>
        <dbReference type="Rhea" id="RHEA-COMP:9689"/>
        <dbReference type="ChEBI" id="CHEBI:15378"/>
        <dbReference type="ChEBI" id="CHEBI:30616"/>
        <dbReference type="ChEBI" id="CHEBI:33019"/>
        <dbReference type="ChEBI" id="CHEBI:57595"/>
        <dbReference type="ChEBI" id="CHEBI:78442"/>
        <dbReference type="ChEBI" id="CHEBI:78527"/>
        <dbReference type="ChEBI" id="CHEBI:456215"/>
        <dbReference type="EC" id="6.1.1.21"/>
    </reaction>
</comment>
<comment type="subunit">
    <text evidence="1">Homodimer.</text>
</comment>
<comment type="subcellular location">
    <subcellularLocation>
        <location evidence="1">Cytoplasm</location>
    </subcellularLocation>
</comment>
<comment type="similarity">
    <text evidence="1">Belongs to the class-II aminoacyl-tRNA synthetase family.</text>
</comment>